<protein>
    <recommendedName>
        <fullName evidence="1">Biotin synthase</fullName>
        <ecNumber evidence="1">2.8.1.6</ecNumber>
    </recommendedName>
</protein>
<name>BIOB_CLOBH</name>
<feature type="chain" id="PRO_0000381313" description="Biotin synthase">
    <location>
        <begin position="1"/>
        <end position="318"/>
    </location>
</feature>
<feature type="domain" description="Radical SAM core" evidence="2">
    <location>
        <begin position="44"/>
        <end position="273"/>
    </location>
</feature>
<feature type="binding site" evidence="1">
    <location>
        <position position="62"/>
    </location>
    <ligand>
        <name>[4Fe-4S] cluster</name>
        <dbReference type="ChEBI" id="CHEBI:49883"/>
        <note>4Fe-4S-S-AdoMet</note>
    </ligand>
</feature>
<feature type="binding site" evidence="1">
    <location>
        <position position="66"/>
    </location>
    <ligand>
        <name>[4Fe-4S] cluster</name>
        <dbReference type="ChEBI" id="CHEBI:49883"/>
        <note>4Fe-4S-S-AdoMet</note>
    </ligand>
</feature>
<feature type="binding site" evidence="1">
    <location>
        <position position="69"/>
    </location>
    <ligand>
        <name>[4Fe-4S] cluster</name>
        <dbReference type="ChEBI" id="CHEBI:49883"/>
        <note>4Fe-4S-S-AdoMet</note>
    </ligand>
</feature>
<feature type="binding site" evidence="1">
    <location>
        <position position="106"/>
    </location>
    <ligand>
        <name>[2Fe-2S] cluster</name>
        <dbReference type="ChEBI" id="CHEBI:190135"/>
    </ligand>
</feature>
<feature type="binding site" evidence="1">
    <location>
        <position position="138"/>
    </location>
    <ligand>
        <name>[2Fe-2S] cluster</name>
        <dbReference type="ChEBI" id="CHEBI:190135"/>
    </ligand>
</feature>
<feature type="binding site" evidence="1">
    <location>
        <position position="198"/>
    </location>
    <ligand>
        <name>[2Fe-2S] cluster</name>
        <dbReference type="ChEBI" id="CHEBI:190135"/>
    </ligand>
</feature>
<feature type="binding site" evidence="1">
    <location>
        <position position="268"/>
    </location>
    <ligand>
        <name>[2Fe-2S] cluster</name>
        <dbReference type="ChEBI" id="CHEBI:190135"/>
    </ligand>
</feature>
<sequence>MSNIIKYKKKILNGDLLTKEEVEELLEEDITDLAATANEIRESLCGNKFDLCTIINGKSGRCQENCKYCAQSAHFDTDIIEYNILNSDRIINSAISNYNKGVHRFSVVTSGRALNNNEVDTLCKTYSKLKETCSIRLCASHGLLKYEDLKRLKDSGVTRYHNNLETSRKFFTKICTTHKYDDKIETIKNAKKAGIEICSGGIIGLGETMEDRIDMAFTLRELSVESVPVNILNPIKGTPLENQEILSYEEIIKTLALFRFILPTVQIRLAGGRTIISDKGKKALESGVNGAISGDMLTTLGIETSEDIKMIKNLGFEV</sequence>
<dbReference type="EC" id="2.8.1.6" evidence="1"/>
<dbReference type="EMBL" id="CP000727">
    <property type="protein sequence ID" value="ABS35996.1"/>
    <property type="molecule type" value="Genomic_DNA"/>
</dbReference>
<dbReference type="EMBL" id="AM412317">
    <property type="protein sequence ID" value="CAL83798.1"/>
    <property type="molecule type" value="Genomic_DNA"/>
</dbReference>
<dbReference type="RefSeq" id="WP_011986728.1">
    <property type="nucleotide sequence ID" value="NC_009698.1"/>
</dbReference>
<dbReference type="RefSeq" id="YP_001254750.1">
    <property type="nucleotide sequence ID" value="NC_009495.1"/>
</dbReference>
<dbReference type="RefSeq" id="YP_001388029.1">
    <property type="nucleotide sequence ID" value="NC_009698.1"/>
</dbReference>
<dbReference type="SMR" id="A5I427"/>
<dbReference type="GeneID" id="5186514"/>
<dbReference type="KEGG" id="cbh:CLC_2183"/>
<dbReference type="KEGG" id="cbo:CBO2259"/>
<dbReference type="PATRIC" id="fig|413999.7.peg.2229"/>
<dbReference type="HOGENOM" id="CLU_033172_2_1_9"/>
<dbReference type="UniPathway" id="UPA00078">
    <property type="reaction ID" value="UER00162"/>
</dbReference>
<dbReference type="PRO" id="PR:A5I427"/>
<dbReference type="Proteomes" id="UP000001986">
    <property type="component" value="Chromosome"/>
</dbReference>
<dbReference type="GO" id="GO:0051537">
    <property type="term" value="F:2 iron, 2 sulfur cluster binding"/>
    <property type="evidence" value="ECO:0000318"/>
    <property type="project" value="GO_Central"/>
</dbReference>
<dbReference type="GO" id="GO:0051539">
    <property type="term" value="F:4 iron, 4 sulfur cluster binding"/>
    <property type="evidence" value="ECO:0007669"/>
    <property type="project" value="UniProtKB-KW"/>
</dbReference>
<dbReference type="GO" id="GO:0004076">
    <property type="term" value="F:biotin synthase activity"/>
    <property type="evidence" value="ECO:0000318"/>
    <property type="project" value="GO_Central"/>
</dbReference>
<dbReference type="GO" id="GO:0005506">
    <property type="term" value="F:iron ion binding"/>
    <property type="evidence" value="ECO:0007669"/>
    <property type="project" value="UniProtKB-UniRule"/>
</dbReference>
<dbReference type="GO" id="GO:0009102">
    <property type="term" value="P:biotin biosynthetic process"/>
    <property type="evidence" value="ECO:0000318"/>
    <property type="project" value="GO_Central"/>
</dbReference>
<dbReference type="CDD" id="cd01335">
    <property type="entry name" value="Radical_SAM"/>
    <property type="match status" value="1"/>
</dbReference>
<dbReference type="FunFam" id="3.20.20.70:FF:000026">
    <property type="entry name" value="Biotin synthase"/>
    <property type="match status" value="1"/>
</dbReference>
<dbReference type="Gene3D" id="3.20.20.70">
    <property type="entry name" value="Aldolase class I"/>
    <property type="match status" value="1"/>
</dbReference>
<dbReference type="HAMAP" id="MF_01694">
    <property type="entry name" value="BioB"/>
    <property type="match status" value="1"/>
</dbReference>
<dbReference type="InterPro" id="IPR013785">
    <property type="entry name" value="Aldolase_TIM"/>
</dbReference>
<dbReference type="InterPro" id="IPR010722">
    <property type="entry name" value="BATS_dom"/>
</dbReference>
<dbReference type="InterPro" id="IPR002684">
    <property type="entry name" value="Biotin_synth/BioAB"/>
</dbReference>
<dbReference type="InterPro" id="IPR024177">
    <property type="entry name" value="Biotin_synthase"/>
</dbReference>
<dbReference type="InterPro" id="IPR006638">
    <property type="entry name" value="Elp3/MiaA/NifB-like_rSAM"/>
</dbReference>
<dbReference type="InterPro" id="IPR007197">
    <property type="entry name" value="rSAM"/>
</dbReference>
<dbReference type="NCBIfam" id="TIGR00433">
    <property type="entry name" value="bioB"/>
    <property type="match status" value="1"/>
</dbReference>
<dbReference type="PANTHER" id="PTHR22976">
    <property type="entry name" value="BIOTIN SYNTHASE"/>
    <property type="match status" value="1"/>
</dbReference>
<dbReference type="PANTHER" id="PTHR22976:SF2">
    <property type="entry name" value="BIOTIN SYNTHASE, MITOCHONDRIAL"/>
    <property type="match status" value="1"/>
</dbReference>
<dbReference type="Pfam" id="PF06968">
    <property type="entry name" value="BATS"/>
    <property type="match status" value="1"/>
</dbReference>
<dbReference type="Pfam" id="PF04055">
    <property type="entry name" value="Radical_SAM"/>
    <property type="match status" value="1"/>
</dbReference>
<dbReference type="PIRSF" id="PIRSF001619">
    <property type="entry name" value="Biotin_synth"/>
    <property type="match status" value="1"/>
</dbReference>
<dbReference type="SFLD" id="SFLDG01278">
    <property type="entry name" value="biotin_synthase_like"/>
    <property type="match status" value="1"/>
</dbReference>
<dbReference type="SFLD" id="SFLDS00029">
    <property type="entry name" value="Radical_SAM"/>
    <property type="match status" value="1"/>
</dbReference>
<dbReference type="SMART" id="SM00876">
    <property type="entry name" value="BATS"/>
    <property type="match status" value="1"/>
</dbReference>
<dbReference type="SMART" id="SM00729">
    <property type="entry name" value="Elp3"/>
    <property type="match status" value="1"/>
</dbReference>
<dbReference type="SUPFAM" id="SSF102114">
    <property type="entry name" value="Radical SAM enzymes"/>
    <property type="match status" value="1"/>
</dbReference>
<dbReference type="PROSITE" id="PS51918">
    <property type="entry name" value="RADICAL_SAM"/>
    <property type="match status" value="1"/>
</dbReference>
<evidence type="ECO:0000255" key="1">
    <source>
        <dbReference type="HAMAP-Rule" id="MF_01694"/>
    </source>
</evidence>
<evidence type="ECO:0000255" key="2">
    <source>
        <dbReference type="PROSITE-ProRule" id="PRU01266"/>
    </source>
</evidence>
<gene>
    <name evidence="1" type="primary">bioB</name>
    <name type="ordered locus">CBO2259</name>
    <name type="ordered locus">CLC_2183</name>
</gene>
<accession>A5I427</accession>
<accession>A7G5G4</accession>
<comment type="function">
    <text evidence="1">Catalyzes the conversion of dethiobiotin (DTB) to biotin by the insertion of a sulfur atom into dethiobiotin via a radical-based mechanism.</text>
</comment>
<comment type="catalytic activity">
    <reaction evidence="1">
        <text>(4R,5S)-dethiobiotin + (sulfur carrier)-SH + 2 reduced [2Fe-2S]-[ferredoxin] + 2 S-adenosyl-L-methionine = (sulfur carrier)-H + biotin + 2 5'-deoxyadenosine + 2 L-methionine + 2 oxidized [2Fe-2S]-[ferredoxin]</text>
        <dbReference type="Rhea" id="RHEA:22060"/>
        <dbReference type="Rhea" id="RHEA-COMP:10000"/>
        <dbReference type="Rhea" id="RHEA-COMP:10001"/>
        <dbReference type="Rhea" id="RHEA-COMP:14737"/>
        <dbReference type="Rhea" id="RHEA-COMP:14739"/>
        <dbReference type="ChEBI" id="CHEBI:17319"/>
        <dbReference type="ChEBI" id="CHEBI:29917"/>
        <dbReference type="ChEBI" id="CHEBI:33737"/>
        <dbReference type="ChEBI" id="CHEBI:33738"/>
        <dbReference type="ChEBI" id="CHEBI:57586"/>
        <dbReference type="ChEBI" id="CHEBI:57844"/>
        <dbReference type="ChEBI" id="CHEBI:59789"/>
        <dbReference type="ChEBI" id="CHEBI:64428"/>
        <dbReference type="ChEBI" id="CHEBI:149473"/>
        <dbReference type="EC" id="2.8.1.6"/>
    </reaction>
</comment>
<comment type="cofactor">
    <cofactor evidence="1">
        <name>[4Fe-4S] cluster</name>
        <dbReference type="ChEBI" id="CHEBI:49883"/>
    </cofactor>
    <text evidence="1">Binds 1 [4Fe-4S] cluster. The cluster is coordinated with 3 cysteines and an exchangeable S-adenosyl-L-methionine.</text>
</comment>
<comment type="cofactor">
    <cofactor evidence="1">
        <name>[2Fe-2S] cluster</name>
        <dbReference type="ChEBI" id="CHEBI:190135"/>
    </cofactor>
    <text evidence="1">Binds 1 [2Fe-2S] cluster. The cluster is coordinated with 3 cysteines and 1 arginine.</text>
</comment>
<comment type="pathway">
    <text evidence="1">Cofactor biosynthesis; biotin biosynthesis; biotin from 7,8-diaminononanoate: step 2/2.</text>
</comment>
<comment type="subunit">
    <text evidence="1">Homodimer.</text>
</comment>
<comment type="similarity">
    <text evidence="1">Belongs to the radical SAM superfamily. Biotin synthase family.</text>
</comment>
<organism>
    <name type="scientific">Clostridium botulinum (strain Hall / ATCC 3502 / NCTC 13319 / Type A)</name>
    <dbReference type="NCBI Taxonomy" id="441771"/>
    <lineage>
        <taxon>Bacteria</taxon>
        <taxon>Bacillati</taxon>
        <taxon>Bacillota</taxon>
        <taxon>Clostridia</taxon>
        <taxon>Eubacteriales</taxon>
        <taxon>Clostridiaceae</taxon>
        <taxon>Clostridium</taxon>
    </lineage>
</organism>
<reference key="1">
    <citation type="journal article" date="2007" name="Genome Res.">
        <title>Genome sequence of a proteolytic (Group I) Clostridium botulinum strain Hall A and comparative analysis of the clostridial genomes.</title>
        <authorList>
            <person name="Sebaihia M."/>
            <person name="Peck M.W."/>
            <person name="Minton N.P."/>
            <person name="Thomson N.R."/>
            <person name="Holden M.T.G."/>
            <person name="Mitchell W.J."/>
            <person name="Carter A.T."/>
            <person name="Bentley S.D."/>
            <person name="Mason D.R."/>
            <person name="Crossman L."/>
            <person name="Paul C.J."/>
            <person name="Ivens A."/>
            <person name="Wells-Bennik M.H.J."/>
            <person name="Davis I.J."/>
            <person name="Cerdeno-Tarraga A.M."/>
            <person name="Churcher C."/>
            <person name="Quail M.A."/>
            <person name="Chillingworth T."/>
            <person name="Feltwell T."/>
            <person name="Fraser A."/>
            <person name="Goodhead I."/>
            <person name="Hance Z."/>
            <person name="Jagels K."/>
            <person name="Larke N."/>
            <person name="Maddison M."/>
            <person name="Moule S."/>
            <person name="Mungall K."/>
            <person name="Norbertczak H."/>
            <person name="Rabbinowitsch E."/>
            <person name="Sanders M."/>
            <person name="Simmonds M."/>
            <person name="White B."/>
            <person name="Whithead S."/>
            <person name="Parkhill J."/>
        </authorList>
    </citation>
    <scope>NUCLEOTIDE SEQUENCE [LARGE SCALE GENOMIC DNA]</scope>
    <source>
        <strain>Hall / ATCC 3502 / NCTC 13319 / Type A</strain>
    </source>
</reference>
<reference key="2">
    <citation type="journal article" date="2007" name="PLoS ONE">
        <title>Analysis of the neurotoxin complex genes in Clostridium botulinum A1-A4 and B1 strains: BoNT/A3, /Ba4 and /B1 clusters are located within plasmids.</title>
        <authorList>
            <person name="Smith T.J."/>
            <person name="Hill K.K."/>
            <person name="Foley B.T."/>
            <person name="Detter J.C."/>
            <person name="Munk A.C."/>
            <person name="Bruce D.C."/>
            <person name="Doggett N.A."/>
            <person name="Smith L.A."/>
            <person name="Marks J.D."/>
            <person name="Xie G."/>
            <person name="Brettin T.S."/>
        </authorList>
    </citation>
    <scope>NUCLEOTIDE SEQUENCE [LARGE SCALE GENOMIC DNA]</scope>
    <source>
        <strain>Hall / ATCC 3502 / NCTC 13319 / Type A</strain>
    </source>
</reference>
<keyword id="KW-0001">2Fe-2S</keyword>
<keyword id="KW-0004">4Fe-4S</keyword>
<keyword id="KW-0093">Biotin biosynthesis</keyword>
<keyword id="KW-0408">Iron</keyword>
<keyword id="KW-0411">Iron-sulfur</keyword>
<keyword id="KW-0479">Metal-binding</keyword>
<keyword id="KW-1185">Reference proteome</keyword>
<keyword id="KW-0949">S-adenosyl-L-methionine</keyword>
<keyword id="KW-0808">Transferase</keyword>
<proteinExistence type="inferred from homology"/>